<comment type="catalytic activity">
    <reaction>
        <text>a uridine in RNA = a pseudouridine in RNA</text>
        <dbReference type="Rhea" id="RHEA:48348"/>
        <dbReference type="Rhea" id="RHEA-COMP:12068"/>
        <dbReference type="Rhea" id="RHEA-COMP:12069"/>
        <dbReference type="ChEBI" id="CHEBI:65314"/>
        <dbReference type="ChEBI" id="CHEBI:65315"/>
    </reaction>
</comment>
<comment type="similarity">
    <text evidence="3">Belongs to the pseudouridine synthase RsuA family.</text>
</comment>
<gene>
    <name type="ordered locus">aq_1464</name>
</gene>
<accession>O67444</accession>
<evidence type="ECO:0000250" key="1"/>
<evidence type="ECO:0000255" key="2">
    <source>
        <dbReference type="PROSITE-ProRule" id="PRU00182"/>
    </source>
</evidence>
<evidence type="ECO:0000305" key="3"/>
<sequence>MMEVRINKFLSEAGVASRRKAEKLILEGRVKVNGEVVRSLGVKVNPEVDIVEVDGKPVKPQRKRYIILNKPCCYLTQLGRSPDGRKTIEELIKDIPERVFPVGRLDYNTEGLLILTNDGELANRILHPRYKLPKVYLALVEGKVDQKTLKRMKQGIELEDGFAKPDNIRIVRYEGKNTLLEITFHEGRKHLVKRFLGAFGHKVKRLKRIAIGPIKLGKLSPGKWRELNQGELAQLFKAVGLKYVPRKRR</sequence>
<protein>
    <recommendedName>
        <fullName>Uncharacterized RNA pseudouridine synthase aq_1464</fullName>
        <ecNumber>5.4.99.-</ecNumber>
    </recommendedName>
    <alternativeName>
        <fullName>RNA pseudouridylate synthase</fullName>
    </alternativeName>
    <alternativeName>
        <fullName>RNA-uridine isomerase</fullName>
    </alternativeName>
</protein>
<reference key="1">
    <citation type="journal article" date="1998" name="Nature">
        <title>The complete genome of the hyperthermophilic bacterium Aquifex aeolicus.</title>
        <authorList>
            <person name="Deckert G."/>
            <person name="Warren P.V."/>
            <person name="Gaasterland T."/>
            <person name="Young W.G."/>
            <person name="Lenox A.L."/>
            <person name="Graham D.E."/>
            <person name="Overbeek R."/>
            <person name="Snead M.A."/>
            <person name="Keller M."/>
            <person name="Aujay M."/>
            <person name="Huber R."/>
            <person name="Feldman R.A."/>
            <person name="Short J.M."/>
            <person name="Olsen G.J."/>
            <person name="Swanson R.V."/>
        </authorList>
    </citation>
    <scope>NUCLEOTIDE SEQUENCE [LARGE SCALE GENOMIC DNA]</scope>
    <source>
        <strain>VF5</strain>
    </source>
</reference>
<organism>
    <name type="scientific">Aquifex aeolicus (strain VF5)</name>
    <dbReference type="NCBI Taxonomy" id="224324"/>
    <lineage>
        <taxon>Bacteria</taxon>
        <taxon>Pseudomonadati</taxon>
        <taxon>Aquificota</taxon>
        <taxon>Aquificia</taxon>
        <taxon>Aquificales</taxon>
        <taxon>Aquificaceae</taxon>
        <taxon>Aquifex</taxon>
    </lineage>
</organism>
<dbReference type="EC" id="5.4.99.-"/>
<dbReference type="EMBL" id="AE000657">
    <property type="protein sequence ID" value="AAC07410.1"/>
    <property type="molecule type" value="Genomic_DNA"/>
</dbReference>
<dbReference type="PIR" id="B70427">
    <property type="entry name" value="B70427"/>
</dbReference>
<dbReference type="RefSeq" id="NP_214009.1">
    <property type="nucleotide sequence ID" value="NC_000918.1"/>
</dbReference>
<dbReference type="RefSeq" id="WP_010880947.1">
    <property type="nucleotide sequence ID" value="NC_000918.1"/>
</dbReference>
<dbReference type="SMR" id="O67444"/>
<dbReference type="STRING" id="224324.aq_1464"/>
<dbReference type="EnsemblBacteria" id="AAC07410">
    <property type="protein sequence ID" value="AAC07410"/>
    <property type="gene ID" value="aq_1464"/>
</dbReference>
<dbReference type="KEGG" id="aae:aq_1464"/>
<dbReference type="PATRIC" id="fig|224324.8.peg.1141"/>
<dbReference type="eggNOG" id="COG1187">
    <property type="taxonomic scope" value="Bacteria"/>
</dbReference>
<dbReference type="HOGENOM" id="CLU_024979_1_2_0"/>
<dbReference type="InParanoid" id="O67444"/>
<dbReference type="OrthoDB" id="9807213at2"/>
<dbReference type="Proteomes" id="UP000000798">
    <property type="component" value="Chromosome"/>
</dbReference>
<dbReference type="GO" id="GO:0003723">
    <property type="term" value="F:RNA binding"/>
    <property type="evidence" value="ECO:0007669"/>
    <property type="project" value="UniProtKB-KW"/>
</dbReference>
<dbReference type="GO" id="GO:0120159">
    <property type="term" value="F:rRNA pseudouridine synthase activity"/>
    <property type="evidence" value="ECO:0007669"/>
    <property type="project" value="UniProtKB-ARBA"/>
</dbReference>
<dbReference type="GO" id="GO:0000455">
    <property type="term" value="P:enzyme-directed rRNA pseudouridine synthesis"/>
    <property type="evidence" value="ECO:0007669"/>
    <property type="project" value="UniProtKB-ARBA"/>
</dbReference>
<dbReference type="CDD" id="cd02870">
    <property type="entry name" value="PseudoU_synth_RsuA_like"/>
    <property type="match status" value="1"/>
</dbReference>
<dbReference type="CDD" id="cd00165">
    <property type="entry name" value="S4"/>
    <property type="match status" value="1"/>
</dbReference>
<dbReference type="FunFam" id="3.10.290.10:FF:000003">
    <property type="entry name" value="Pseudouridine synthase"/>
    <property type="match status" value="1"/>
</dbReference>
<dbReference type="FunFam" id="3.30.70.1560:FF:000001">
    <property type="entry name" value="Pseudouridine synthase"/>
    <property type="match status" value="1"/>
</dbReference>
<dbReference type="Gene3D" id="3.30.70.1560">
    <property type="entry name" value="Alpha-L RNA-binding motif"/>
    <property type="match status" value="1"/>
</dbReference>
<dbReference type="Gene3D" id="3.30.70.580">
    <property type="entry name" value="Pseudouridine synthase I, catalytic domain, N-terminal subdomain"/>
    <property type="match status" value="1"/>
</dbReference>
<dbReference type="Gene3D" id="3.10.290.10">
    <property type="entry name" value="RNA-binding S4 domain"/>
    <property type="match status" value="1"/>
</dbReference>
<dbReference type="InterPro" id="IPR042092">
    <property type="entry name" value="PsdUridine_s_RsuA/RluB/E/F_cat"/>
</dbReference>
<dbReference type="InterPro" id="IPR020103">
    <property type="entry name" value="PsdUridine_synth_cat_dom_sf"/>
</dbReference>
<dbReference type="InterPro" id="IPR006145">
    <property type="entry name" value="PsdUridine_synth_RsuA/RluA"/>
</dbReference>
<dbReference type="InterPro" id="IPR000748">
    <property type="entry name" value="PsdUridine_synth_RsuA/RluB/E/F"/>
</dbReference>
<dbReference type="InterPro" id="IPR018496">
    <property type="entry name" value="PsdUridine_synth_RsuA/RluB_CS"/>
</dbReference>
<dbReference type="InterPro" id="IPR050343">
    <property type="entry name" value="RsuA_PseudoU_synthase"/>
</dbReference>
<dbReference type="InterPro" id="IPR002942">
    <property type="entry name" value="S4_RNA-bd"/>
</dbReference>
<dbReference type="InterPro" id="IPR036986">
    <property type="entry name" value="S4_RNA-bd_sf"/>
</dbReference>
<dbReference type="InterPro" id="IPR020094">
    <property type="entry name" value="TruA/RsuA/RluB/E/F_N"/>
</dbReference>
<dbReference type="NCBIfam" id="TIGR00093">
    <property type="entry name" value="pseudouridine synthase"/>
    <property type="match status" value="1"/>
</dbReference>
<dbReference type="PANTHER" id="PTHR47683">
    <property type="entry name" value="PSEUDOURIDINE SYNTHASE FAMILY PROTEIN-RELATED"/>
    <property type="match status" value="1"/>
</dbReference>
<dbReference type="PANTHER" id="PTHR47683:SF2">
    <property type="entry name" value="RNA-BINDING S4 DOMAIN-CONTAINING PROTEIN"/>
    <property type="match status" value="1"/>
</dbReference>
<dbReference type="Pfam" id="PF00849">
    <property type="entry name" value="PseudoU_synth_2"/>
    <property type="match status" value="1"/>
</dbReference>
<dbReference type="Pfam" id="PF01479">
    <property type="entry name" value="S4"/>
    <property type="match status" value="1"/>
</dbReference>
<dbReference type="SMART" id="SM00363">
    <property type="entry name" value="S4"/>
    <property type="match status" value="1"/>
</dbReference>
<dbReference type="SUPFAM" id="SSF55174">
    <property type="entry name" value="Alpha-L RNA-binding motif"/>
    <property type="match status" value="1"/>
</dbReference>
<dbReference type="SUPFAM" id="SSF55120">
    <property type="entry name" value="Pseudouridine synthase"/>
    <property type="match status" value="1"/>
</dbReference>
<dbReference type="PROSITE" id="PS01149">
    <property type="entry name" value="PSI_RSU"/>
    <property type="match status" value="1"/>
</dbReference>
<dbReference type="PROSITE" id="PS50889">
    <property type="entry name" value="S4"/>
    <property type="match status" value="1"/>
</dbReference>
<keyword id="KW-0413">Isomerase</keyword>
<keyword id="KW-1185">Reference proteome</keyword>
<keyword id="KW-0694">RNA-binding</keyword>
<proteinExistence type="inferred from homology"/>
<name>Y1464_AQUAE</name>
<feature type="chain" id="PRO_0000100023" description="Uncharacterized RNA pseudouridine synthase aq_1464">
    <location>
        <begin position="1"/>
        <end position="249"/>
    </location>
</feature>
<feature type="domain" description="S4 RNA-binding" evidence="2">
    <location>
        <begin position="4"/>
        <end position="71"/>
    </location>
</feature>
<feature type="active site" description="Nucleophile" evidence="1">
    <location>
        <position position="106"/>
    </location>
</feature>